<proteinExistence type="inferred from homology"/>
<name>FABI1_RHIME</name>
<evidence type="ECO:0000250" key="1"/>
<evidence type="ECO:0000305" key="2"/>
<organism>
    <name type="scientific">Rhizobium meliloti (strain 1021)</name>
    <name type="common">Ensifer meliloti</name>
    <name type="synonym">Sinorhizobium meliloti</name>
    <dbReference type="NCBI Taxonomy" id="266834"/>
    <lineage>
        <taxon>Bacteria</taxon>
        <taxon>Pseudomonadati</taxon>
        <taxon>Pseudomonadota</taxon>
        <taxon>Alphaproteobacteria</taxon>
        <taxon>Hyphomicrobiales</taxon>
        <taxon>Rhizobiaceae</taxon>
        <taxon>Sinorhizobium/Ensifer group</taxon>
        <taxon>Sinorhizobium</taxon>
    </lineage>
</organism>
<gene>
    <name type="primary">fabI1</name>
    <name type="ordered locus">R00898</name>
    <name type="ORF">SMc00005</name>
</gene>
<keyword id="KW-0997">Cell inner membrane</keyword>
<keyword id="KW-1003">Cell membrane</keyword>
<keyword id="KW-0275">Fatty acid biosynthesis</keyword>
<keyword id="KW-0276">Fatty acid metabolism</keyword>
<keyword id="KW-0444">Lipid biosynthesis</keyword>
<keyword id="KW-0443">Lipid metabolism</keyword>
<keyword id="KW-0472">Membrane</keyword>
<keyword id="KW-0520">NAD</keyword>
<keyword id="KW-0560">Oxidoreductase</keyword>
<keyword id="KW-1185">Reference proteome</keyword>
<accession>P58380</accession>
<dbReference type="EC" id="1.3.1.9"/>
<dbReference type="EMBL" id="AL591688">
    <property type="protein sequence ID" value="CAC45470.1"/>
    <property type="molecule type" value="Genomic_DNA"/>
</dbReference>
<dbReference type="RefSeq" id="NP_385004.1">
    <property type="nucleotide sequence ID" value="NC_003047.1"/>
</dbReference>
<dbReference type="SMR" id="P58380"/>
<dbReference type="EnsemblBacteria" id="CAC45470">
    <property type="protein sequence ID" value="CAC45470"/>
    <property type="gene ID" value="SMc00005"/>
</dbReference>
<dbReference type="KEGG" id="sme:SMc00005"/>
<dbReference type="PATRIC" id="fig|266834.11.peg.2294"/>
<dbReference type="eggNOG" id="COG0623">
    <property type="taxonomic scope" value="Bacteria"/>
</dbReference>
<dbReference type="HOGENOM" id="CLU_010194_10_1_5"/>
<dbReference type="OrthoDB" id="9803628at2"/>
<dbReference type="UniPathway" id="UPA00094"/>
<dbReference type="Proteomes" id="UP000001976">
    <property type="component" value="Chromosome"/>
</dbReference>
<dbReference type="GO" id="GO:0005886">
    <property type="term" value="C:plasma membrane"/>
    <property type="evidence" value="ECO:0007669"/>
    <property type="project" value="UniProtKB-SubCell"/>
</dbReference>
<dbReference type="GO" id="GO:0004318">
    <property type="term" value="F:enoyl-[acyl-carrier-protein] reductase (NADH) activity"/>
    <property type="evidence" value="ECO:0007669"/>
    <property type="project" value="UniProtKB-EC"/>
</dbReference>
<dbReference type="GO" id="GO:0006633">
    <property type="term" value="P:fatty acid biosynthetic process"/>
    <property type="evidence" value="ECO:0007669"/>
    <property type="project" value="UniProtKB-UniPathway"/>
</dbReference>
<dbReference type="CDD" id="cd05372">
    <property type="entry name" value="ENR_SDR"/>
    <property type="match status" value="1"/>
</dbReference>
<dbReference type="FunFam" id="1.10.8.400:FF:000001">
    <property type="entry name" value="Enoyl-[acyl-carrier-protein] reductase [NADH]"/>
    <property type="match status" value="1"/>
</dbReference>
<dbReference type="FunFam" id="3.40.50.720:FF:000054">
    <property type="entry name" value="Enoyl-[acyl-carrier-protein] reductase [NADH]"/>
    <property type="match status" value="1"/>
</dbReference>
<dbReference type="Gene3D" id="1.10.8.400">
    <property type="entry name" value="Enoyl acyl carrier protein reductase"/>
    <property type="match status" value="1"/>
</dbReference>
<dbReference type="Gene3D" id="3.40.50.720">
    <property type="entry name" value="NAD(P)-binding Rossmann-like Domain"/>
    <property type="match status" value="1"/>
</dbReference>
<dbReference type="InterPro" id="IPR014358">
    <property type="entry name" value="Enoyl-ACP_Rdtase_NADH"/>
</dbReference>
<dbReference type="InterPro" id="IPR036291">
    <property type="entry name" value="NAD(P)-bd_dom_sf"/>
</dbReference>
<dbReference type="InterPro" id="IPR002347">
    <property type="entry name" value="SDR_fam"/>
</dbReference>
<dbReference type="NCBIfam" id="NF006019">
    <property type="entry name" value="PRK08159.1"/>
    <property type="match status" value="1"/>
</dbReference>
<dbReference type="PANTHER" id="PTHR43159">
    <property type="entry name" value="ENOYL-[ACYL-CARRIER-PROTEIN] REDUCTASE"/>
    <property type="match status" value="1"/>
</dbReference>
<dbReference type="PANTHER" id="PTHR43159:SF2">
    <property type="entry name" value="ENOYL-[ACYL-CARRIER-PROTEIN] REDUCTASE [NADH], CHLOROPLASTIC"/>
    <property type="match status" value="1"/>
</dbReference>
<dbReference type="Pfam" id="PF13561">
    <property type="entry name" value="adh_short_C2"/>
    <property type="match status" value="1"/>
</dbReference>
<dbReference type="PIRSF" id="PIRSF000094">
    <property type="entry name" value="Enoyl-ACP_rdct"/>
    <property type="match status" value="1"/>
</dbReference>
<dbReference type="PRINTS" id="PR00081">
    <property type="entry name" value="GDHRDH"/>
</dbReference>
<dbReference type="SUPFAM" id="SSF51735">
    <property type="entry name" value="NAD(P)-binding Rossmann-fold domains"/>
    <property type="match status" value="1"/>
</dbReference>
<protein>
    <recommendedName>
        <fullName>Enoyl-[acyl-carrier-protein] reductase [NADH] 1</fullName>
        <ecNumber>1.3.1.9</ecNumber>
    </recommendedName>
    <alternativeName>
        <fullName>NADH-dependent enoyl-ACP reductase 1</fullName>
    </alternativeName>
</protein>
<sequence length="272" mass="29148">MAQASGLMNGKRGVIMGVANNRSIAWGIAKALAEAGAEIALTWQGDALKKRVEPLAQELGAFMAGHCDVTDLATIDAVFSALEEKWGKIDFVVHAIAFSDKDELTGRYLDTSRDNFARTMDISVYSFTAVAARADRVMNDGGSILTLTYYGAEKVMPHYNVMGVAKAALEASVRYLAVDLGNRGIRVNAISAGPIKTLAASGIGDFRYILKWNEYNAPLKRTVSIEEVGNSALYLLSDLSSGVTGEVHHVDSGYHTVGMKAVDAPDISVLKD</sequence>
<reference key="1">
    <citation type="journal article" date="2001" name="Proc. Natl. Acad. Sci. U.S.A.">
        <title>Analysis of the chromosome sequence of the legume symbiont Sinorhizobium meliloti strain 1021.</title>
        <authorList>
            <person name="Capela D."/>
            <person name="Barloy-Hubler F."/>
            <person name="Gouzy J."/>
            <person name="Bothe G."/>
            <person name="Ampe F."/>
            <person name="Batut J."/>
            <person name="Boistard P."/>
            <person name="Becker A."/>
            <person name="Boutry M."/>
            <person name="Cadieu E."/>
            <person name="Dreano S."/>
            <person name="Gloux S."/>
            <person name="Godrie T."/>
            <person name="Goffeau A."/>
            <person name="Kahn D."/>
            <person name="Kiss E."/>
            <person name="Lelaure V."/>
            <person name="Masuy D."/>
            <person name="Pohl T."/>
            <person name="Portetelle D."/>
            <person name="Puehler A."/>
            <person name="Purnelle B."/>
            <person name="Ramsperger U."/>
            <person name="Renard C."/>
            <person name="Thebault P."/>
            <person name="Vandenbol M."/>
            <person name="Weidner S."/>
            <person name="Galibert F."/>
        </authorList>
    </citation>
    <scope>NUCLEOTIDE SEQUENCE [LARGE SCALE GENOMIC DNA]</scope>
    <source>
        <strain>1021</strain>
    </source>
</reference>
<reference key="2">
    <citation type="journal article" date="2001" name="Science">
        <title>The composite genome of the legume symbiont Sinorhizobium meliloti.</title>
        <authorList>
            <person name="Galibert F."/>
            <person name="Finan T.M."/>
            <person name="Long S.R."/>
            <person name="Puehler A."/>
            <person name="Abola P."/>
            <person name="Ampe F."/>
            <person name="Barloy-Hubler F."/>
            <person name="Barnett M.J."/>
            <person name="Becker A."/>
            <person name="Boistard P."/>
            <person name="Bothe G."/>
            <person name="Boutry M."/>
            <person name="Bowser L."/>
            <person name="Buhrmester J."/>
            <person name="Cadieu E."/>
            <person name="Capela D."/>
            <person name="Chain P."/>
            <person name="Cowie A."/>
            <person name="Davis R.W."/>
            <person name="Dreano S."/>
            <person name="Federspiel N.A."/>
            <person name="Fisher R.F."/>
            <person name="Gloux S."/>
            <person name="Godrie T."/>
            <person name="Goffeau A."/>
            <person name="Golding B."/>
            <person name="Gouzy J."/>
            <person name="Gurjal M."/>
            <person name="Hernandez-Lucas I."/>
            <person name="Hong A."/>
            <person name="Huizar L."/>
            <person name="Hyman R.W."/>
            <person name="Jones T."/>
            <person name="Kahn D."/>
            <person name="Kahn M.L."/>
            <person name="Kalman S."/>
            <person name="Keating D.H."/>
            <person name="Kiss E."/>
            <person name="Komp C."/>
            <person name="Lelaure V."/>
            <person name="Masuy D."/>
            <person name="Palm C."/>
            <person name="Peck M.C."/>
            <person name="Pohl T.M."/>
            <person name="Portetelle D."/>
            <person name="Purnelle B."/>
            <person name="Ramsperger U."/>
            <person name="Surzycki R."/>
            <person name="Thebault P."/>
            <person name="Vandenbol M."/>
            <person name="Vorhoelter F.J."/>
            <person name="Weidner S."/>
            <person name="Wells D.H."/>
            <person name="Wong K."/>
            <person name="Yeh K.-C."/>
            <person name="Batut J."/>
        </authorList>
    </citation>
    <scope>NUCLEOTIDE SEQUENCE [LARGE SCALE GENOMIC DNA]</scope>
    <source>
        <strain>1021</strain>
    </source>
</reference>
<feature type="chain" id="PRO_0000054905" description="Enoyl-[acyl-carrier-protein] reductase [NADH] 1">
    <location>
        <begin position="1"/>
        <end position="272"/>
    </location>
</feature>
<feature type="active site" description="Proton acceptor" evidence="1">
    <location>
        <position position="149"/>
    </location>
</feature>
<feature type="active site" description="Proton acceptor" evidence="1">
    <location>
        <position position="159"/>
    </location>
</feature>
<feature type="binding site" evidence="1">
    <location>
        <position position="17"/>
    </location>
    <ligand>
        <name>NAD(+)</name>
        <dbReference type="ChEBI" id="CHEBI:57540"/>
    </ligand>
</feature>
<feature type="binding site" evidence="1">
    <location>
        <begin position="23"/>
        <end position="24"/>
    </location>
    <ligand>
        <name>NAD(+)</name>
        <dbReference type="ChEBI" id="CHEBI:57540"/>
    </ligand>
</feature>
<feature type="binding site" evidence="1">
    <location>
        <position position="44"/>
    </location>
    <ligand>
        <name>NAD(+)</name>
        <dbReference type="ChEBI" id="CHEBI:57540"/>
    </ligand>
</feature>
<feature type="binding site" evidence="1">
    <location>
        <begin position="68"/>
        <end position="69"/>
    </location>
    <ligand>
        <name>NAD(+)</name>
        <dbReference type="ChEBI" id="CHEBI:57540"/>
    </ligand>
</feature>
<feature type="binding site" evidence="1">
    <location>
        <position position="96"/>
    </location>
    <ligand>
        <name>NAD(+)</name>
        <dbReference type="ChEBI" id="CHEBI:57540"/>
    </ligand>
</feature>
<feature type="binding site" evidence="1">
    <location>
        <position position="166"/>
    </location>
    <ligand>
        <name>NAD(+)</name>
        <dbReference type="ChEBI" id="CHEBI:57540"/>
    </ligand>
</feature>
<feature type="binding site" evidence="1">
    <location>
        <begin position="195"/>
        <end position="199"/>
    </location>
    <ligand>
        <name>NAD(+)</name>
        <dbReference type="ChEBI" id="CHEBI:57540"/>
    </ligand>
</feature>
<feature type="site" description="Involved in acyl-ACP binding" evidence="1">
    <location>
        <position position="207"/>
    </location>
</feature>
<comment type="catalytic activity">
    <reaction>
        <text>a 2,3-saturated acyl-[ACP] + NAD(+) = a (2E)-enoyl-[ACP] + NADH + H(+)</text>
        <dbReference type="Rhea" id="RHEA:10240"/>
        <dbReference type="Rhea" id="RHEA-COMP:9925"/>
        <dbReference type="Rhea" id="RHEA-COMP:9926"/>
        <dbReference type="ChEBI" id="CHEBI:15378"/>
        <dbReference type="ChEBI" id="CHEBI:57540"/>
        <dbReference type="ChEBI" id="CHEBI:57945"/>
        <dbReference type="ChEBI" id="CHEBI:78784"/>
        <dbReference type="ChEBI" id="CHEBI:78785"/>
        <dbReference type="EC" id="1.3.1.9"/>
    </reaction>
</comment>
<comment type="pathway">
    <text>Lipid metabolism; fatty acid biosynthesis.</text>
</comment>
<comment type="subcellular location">
    <subcellularLocation>
        <location evidence="1">Cell inner membrane</location>
        <topology evidence="1">Peripheral membrane protein</topology>
    </subcellularLocation>
</comment>
<comment type="similarity">
    <text evidence="2">Belongs to the short-chain dehydrogenases/reductases (SDR) family. FabI subfamily.</text>
</comment>